<comment type="function">
    <text evidence="1">Participates actively in the response to hyperosmotic and heat shock by preventing the aggregation of stress-denatured proteins, in association with DnaK and GrpE. It is the nucleotide exchange factor for DnaK and may function as a thermosensor. Unfolded proteins bind initially to DnaJ; upon interaction with the DnaJ-bound protein, DnaK hydrolyzes its bound ATP, resulting in the formation of a stable complex. GrpE releases ADP from DnaK; ATP binding to DnaK triggers the release of the substrate protein, thus completing the reaction cycle. Several rounds of ATP-dependent interactions between DnaJ, DnaK and GrpE are required for fully efficient folding.</text>
</comment>
<comment type="subunit">
    <text evidence="1">Homodimer.</text>
</comment>
<comment type="subcellular location">
    <subcellularLocation>
        <location evidence="1">Cytoplasm</location>
    </subcellularLocation>
</comment>
<comment type="similarity">
    <text evidence="1">Belongs to the GrpE family.</text>
</comment>
<name>GRPE_METST</name>
<organism>
    <name type="scientific">Methanosphaera stadtmanae (strain ATCC 43021 / DSM 3091 / JCM 11832 / MCB-3)</name>
    <dbReference type="NCBI Taxonomy" id="339860"/>
    <lineage>
        <taxon>Archaea</taxon>
        <taxon>Methanobacteriati</taxon>
        <taxon>Methanobacteriota</taxon>
        <taxon>Methanomada group</taxon>
        <taxon>Methanobacteria</taxon>
        <taxon>Methanobacteriales</taxon>
        <taxon>Methanobacteriaceae</taxon>
        <taxon>Methanosphaera</taxon>
    </lineage>
</organism>
<reference key="1">
    <citation type="journal article" date="2006" name="J. Bacteriol.">
        <title>The genome sequence of Methanosphaera stadtmanae reveals why this human intestinal archaeon is restricted to methanol and H2 for methane formation and ATP synthesis.</title>
        <authorList>
            <person name="Fricke W.F."/>
            <person name="Seedorf H."/>
            <person name="Henne A."/>
            <person name="Kruer M."/>
            <person name="Liesegang H."/>
            <person name="Hedderich R."/>
            <person name="Gottschalk G."/>
            <person name="Thauer R.K."/>
        </authorList>
    </citation>
    <scope>NUCLEOTIDE SEQUENCE [LARGE SCALE GENOMIC DNA]</scope>
    <source>
        <strain>ATCC 43021 / DSM 3091 / JCM 11832 / MCB-3</strain>
    </source>
</reference>
<accession>Q2NE66</accession>
<evidence type="ECO:0000255" key="1">
    <source>
        <dbReference type="HAMAP-Rule" id="MF_01151"/>
    </source>
</evidence>
<evidence type="ECO:0000256" key="2">
    <source>
        <dbReference type="SAM" id="MobiDB-lite"/>
    </source>
</evidence>
<sequence>MTEEEKTKSEAEEIEQNNKEEEQEKSVEELLEEKEQEIQQYKDKLQRIHADFENFKKRSIKEKQEFVKFANEGLILKVLEAYEDLERALEVKEDKNLREGVELIYKKLTKILEDEGVEPIETKNQKFDPYKHEALMTEDNDDYENNEIIQDLQKGYTLNSKVIRYSKVKVCKK</sequence>
<dbReference type="EMBL" id="CP000102">
    <property type="protein sequence ID" value="ABC57887.1"/>
    <property type="molecule type" value="Genomic_DNA"/>
</dbReference>
<dbReference type="RefSeq" id="WP_011407086.1">
    <property type="nucleotide sequence ID" value="NC_007681.1"/>
</dbReference>
<dbReference type="SMR" id="Q2NE66"/>
<dbReference type="STRING" id="339860.Msp_1518"/>
<dbReference type="GeneID" id="41326094"/>
<dbReference type="KEGG" id="mst:Msp_1518"/>
<dbReference type="eggNOG" id="arCOG04772">
    <property type="taxonomic scope" value="Archaea"/>
</dbReference>
<dbReference type="HOGENOM" id="CLU_057217_5_2_2"/>
<dbReference type="OrthoDB" id="372230at2157"/>
<dbReference type="Proteomes" id="UP000001931">
    <property type="component" value="Chromosome"/>
</dbReference>
<dbReference type="GO" id="GO:0005737">
    <property type="term" value="C:cytoplasm"/>
    <property type="evidence" value="ECO:0007669"/>
    <property type="project" value="UniProtKB-SubCell"/>
</dbReference>
<dbReference type="GO" id="GO:0000774">
    <property type="term" value="F:adenyl-nucleotide exchange factor activity"/>
    <property type="evidence" value="ECO:0007669"/>
    <property type="project" value="InterPro"/>
</dbReference>
<dbReference type="GO" id="GO:0042803">
    <property type="term" value="F:protein homodimerization activity"/>
    <property type="evidence" value="ECO:0007669"/>
    <property type="project" value="InterPro"/>
</dbReference>
<dbReference type="GO" id="GO:0051087">
    <property type="term" value="F:protein-folding chaperone binding"/>
    <property type="evidence" value="ECO:0007669"/>
    <property type="project" value="InterPro"/>
</dbReference>
<dbReference type="GO" id="GO:0051082">
    <property type="term" value="F:unfolded protein binding"/>
    <property type="evidence" value="ECO:0007669"/>
    <property type="project" value="TreeGrafter"/>
</dbReference>
<dbReference type="GO" id="GO:0006457">
    <property type="term" value="P:protein folding"/>
    <property type="evidence" value="ECO:0007669"/>
    <property type="project" value="InterPro"/>
</dbReference>
<dbReference type="CDD" id="cd00446">
    <property type="entry name" value="GrpE"/>
    <property type="match status" value="1"/>
</dbReference>
<dbReference type="FunFam" id="2.30.22.10:FF:000001">
    <property type="entry name" value="Protein GrpE"/>
    <property type="match status" value="1"/>
</dbReference>
<dbReference type="Gene3D" id="3.90.20.20">
    <property type="match status" value="1"/>
</dbReference>
<dbReference type="Gene3D" id="2.30.22.10">
    <property type="entry name" value="Head domain of nucleotide exchange factor GrpE"/>
    <property type="match status" value="1"/>
</dbReference>
<dbReference type="HAMAP" id="MF_01151">
    <property type="entry name" value="GrpE"/>
    <property type="match status" value="1"/>
</dbReference>
<dbReference type="InterPro" id="IPR000740">
    <property type="entry name" value="GrpE"/>
</dbReference>
<dbReference type="InterPro" id="IPR013805">
    <property type="entry name" value="GrpE_coiled_coil"/>
</dbReference>
<dbReference type="InterPro" id="IPR009012">
    <property type="entry name" value="GrpE_head"/>
</dbReference>
<dbReference type="NCBIfam" id="NF010738">
    <property type="entry name" value="PRK14140.1"/>
    <property type="match status" value="1"/>
</dbReference>
<dbReference type="PANTHER" id="PTHR21237">
    <property type="entry name" value="GRPE PROTEIN"/>
    <property type="match status" value="1"/>
</dbReference>
<dbReference type="PANTHER" id="PTHR21237:SF23">
    <property type="entry name" value="GRPE PROTEIN HOMOLOG, MITOCHONDRIAL"/>
    <property type="match status" value="1"/>
</dbReference>
<dbReference type="Pfam" id="PF01025">
    <property type="entry name" value="GrpE"/>
    <property type="match status" value="1"/>
</dbReference>
<dbReference type="PRINTS" id="PR00773">
    <property type="entry name" value="GRPEPROTEIN"/>
</dbReference>
<dbReference type="SUPFAM" id="SSF58014">
    <property type="entry name" value="Coiled-coil domain of nucleotide exchange factor GrpE"/>
    <property type="match status" value="1"/>
</dbReference>
<dbReference type="SUPFAM" id="SSF51064">
    <property type="entry name" value="Head domain of nucleotide exchange factor GrpE"/>
    <property type="match status" value="1"/>
</dbReference>
<dbReference type="PROSITE" id="PS01071">
    <property type="entry name" value="GRPE"/>
    <property type="match status" value="1"/>
</dbReference>
<feature type="chain" id="PRO_1000053606" description="Protein GrpE">
    <location>
        <begin position="1"/>
        <end position="173"/>
    </location>
</feature>
<feature type="region of interest" description="Disordered" evidence="2">
    <location>
        <begin position="1"/>
        <end position="30"/>
    </location>
</feature>
<feature type="compositionally biased region" description="Basic and acidic residues" evidence="2">
    <location>
        <begin position="1"/>
        <end position="28"/>
    </location>
</feature>
<gene>
    <name evidence="1" type="primary">grpE</name>
    <name type="ordered locus">Msp_1518</name>
</gene>
<proteinExistence type="inferred from homology"/>
<keyword id="KW-0143">Chaperone</keyword>
<keyword id="KW-0963">Cytoplasm</keyword>
<keyword id="KW-1185">Reference proteome</keyword>
<keyword id="KW-0346">Stress response</keyword>
<protein>
    <recommendedName>
        <fullName evidence="1">Protein GrpE</fullName>
    </recommendedName>
    <alternativeName>
        <fullName evidence="1">HSP-70 cofactor</fullName>
    </alternativeName>
</protein>